<comment type="function">
    <text evidence="1">Succinyl-CoA synthetase functions in the citric acid cycle (TCA), coupling the hydrolysis of succinyl-CoA to the synthesis of either ATP or GTP and thus represents the only step of substrate-level phosphorylation in the TCA. The alpha subunit of the enzyme binds the substrates coenzyme A and phosphate, while succinate binding and nucleotide specificity is provided by the beta subunit.</text>
</comment>
<comment type="catalytic activity">
    <reaction evidence="1">
        <text>succinate + ATP + CoA = succinyl-CoA + ADP + phosphate</text>
        <dbReference type="Rhea" id="RHEA:17661"/>
        <dbReference type="ChEBI" id="CHEBI:30031"/>
        <dbReference type="ChEBI" id="CHEBI:30616"/>
        <dbReference type="ChEBI" id="CHEBI:43474"/>
        <dbReference type="ChEBI" id="CHEBI:57287"/>
        <dbReference type="ChEBI" id="CHEBI:57292"/>
        <dbReference type="ChEBI" id="CHEBI:456216"/>
        <dbReference type="EC" id="6.2.1.5"/>
    </reaction>
    <physiologicalReaction direction="right-to-left" evidence="1">
        <dbReference type="Rhea" id="RHEA:17663"/>
    </physiologicalReaction>
</comment>
<comment type="catalytic activity">
    <reaction evidence="1">
        <text>GTP + succinate + CoA = succinyl-CoA + GDP + phosphate</text>
        <dbReference type="Rhea" id="RHEA:22120"/>
        <dbReference type="ChEBI" id="CHEBI:30031"/>
        <dbReference type="ChEBI" id="CHEBI:37565"/>
        <dbReference type="ChEBI" id="CHEBI:43474"/>
        <dbReference type="ChEBI" id="CHEBI:57287"/>
        <dbReference type="ChEBI" id="CHEBI:57292"/>
        <dbReference type="ChEBI" id="CHEBI:58189"/>
    </reaction>
    <physiologicalReaction direction="right-to-left" evidence="1">
        <dbReference type="Rhea" id="RHEA:22122"/>
    </physiologicalReaction>
</comment>
<comment type="pathway">
    <text evidence="1">Carbohydrate metabolism; tricarboxylic acid cycle; succinate from succinyl-CoA (ligase route): step 1/1.</text>
</comment>
<comment type="subunit">
    <text evidence="1">Heterotetramer of two alpha and two beta subunits.</text>
</comment>
<comment type="similarity">
    <text evidence="1">Belongs to the succinate/malate CoA ligase alpha subunit family.</text>
</comment>
<evidence type="ECO:0000255" key="1">
    <source>
        <dbReference type="HAMAP-Rule" id="MF_01988"/>
    </source>
</evidence>
<evidence type="ECO:0000269" key="2">
    <source>
    </source>
</evidence>
<reference key="1">
    <citation type="submission" date="1997-10" db="EMBL/GenBank/DDBJ databases">
        <title>Cloning and sequencing 7.5 Kbp of DNA from Bacillus subtilis upstream of the codV gene.</title>
        <authorList>
            <person name="Foulger D."/>
            <person name="Errington J."/>
        </authorList>
    </citation>
    <scope>NUCLEOTIDE SEQUENCE [GENOMIC DNA]</scope>
    <source>
        <strain>168</strain>
    </source>
</reference>
<reference key="2">
    <citation type="journal article" date="1997" name="Nature">
        <title>The complete genome sequence of the Gram-positive bacterium Bacillus subtilis.</title>
        <authorList>
            <person name="Kunst F."/>
            <person name="Ogasawara N."/>
            <person name="Moszer I."/>
            <person name="Albertini A.M."/>
            <person name="Alloni G."/>
            <person name="Azevedo V."/>
            <person name="Bertero M.G."/>
            <person name="Bessieres P."/>
            <person name="Bolotin A."/>
            <person name="Borchert S."/>
            <person name="Borriss R."/>
            <person name="Boursier L."/>
            <person name="Brans A."/>
            <person name="Braun M."/>
            <person name="Brignell S.C."/>
            <person name="Bron S."/>
            <person name="Brouillet S."/>
            <person name="Bruschi C.V."/>
            <person name="Caldwell B."/>
            <person name="Capuano V."/>
            <person name="Carter N.M."/>
            <person name="Choi S.-K."/>
            <person name="Codani J.-J."/>
            <person name="Connerton I.F."/>
            <person name="Cummings N.J."/>
            <person name="Daniel R.A."/>
            <person name="Denizot F."/>
            <person name="Devine K.M."/>
            <person name="Duesterhoeft A."/>
            <person name="Ehrlich S.D."/>
            <person name="Emmerson P.T."/>
            <person name="Entian K.-D."/>
            <person name="Errington J."/>
            <person name="Fabret C."/>
            <person name="Ferrari E."/>
            <person name="Foulger D."/>
            <person name="Fritz C."/>
            <person name="Fujita M."/>
            <person name="Fujita Y."/>
            <person name="Fuma S."/>
            <person name="Galizzi A."/>
            <person name="Galleron N."/>
            <person name="Ghim S.-Y."/>
            <person name="Glaser P."/>
            <person name="Goffeau A."/>
            <person name="Golightly E.J."/>
            <person name="Grandi G."/>
            <person name="Guiseppi G."/>
            <person name="Guy B.J."/>
            <person name="Haga K."/>
            <person name="Haiech J."/>
            <person name="Harwood C.R."/>
            <person name="Henaut A."/>
            <person name="Hilbert H."/>
            <person name="Holsappel S."/>
            <person name="Hosono S."/>
            <person name="Hullo M.-F."/>
            <person name="Itaya M."/>
            <person name="Jones L.-M."/>
            <person name="Joris B."/>
            <person name="Karamata D."/>
            <person name="Kasahara Y."/>
            <person name="Klaerr-Blanchard M."/>
            <person name="Klein C."/>
            <person name="Kobayashi Y."/>
            <person name="Koetter P."/>
            <person name="Koningstein G."/>
            <person name="Krogh S."/>
            <person name="Kumano M."/>
            <person name="Kurita K."/>
            <person name="Lapidus A."/>
            <person name="Lardinois S."/>
            <person name="Lauber J."/>
            <person name="Lazarevic V."/>
            <person name="Lee S.-M."/>
            <person name="Levine A."/>
            <person name="Liu H."/>
            <person name="Masuda S."/>
            <person name="Mauel C."/>
            <person name="Medigue C."/>
            <person name="Medina N."/>
            <person name="Mellado R.P."/>
            <person name="Mizuno M."/>
            <person name="Moestl D."/>
            <person name="Nakai S."/>
            <person name="Noback M."/>
            <person name="Noone D."/>
            <person name="O'Reilly M."/>
            <person name="Ogawa K."/>
            <person name="Ogiwara A."/>
            <person name="Oudega B."/>
            <person name="Park S.-H."/>
            <person name="Parro V."/>
            <person name="Pohl T.M."/>
            <person name="Portetelle D."/>
            <person name="Porwollik S."/>
            <person name="Prescott A.M."/>
            <person name="Presecan E."/>
            <person name="Pujic P."/>
            <person name="Purnelle B."/>
            <person name="Rapoport G."/>
            <person name="Rey M."/>
            <person name="Reynolds S."/>
            <person name="Rieger M."/>
            <person name="Rivolta C."/>
            <person name="Rocha E."/>
            <person name="Roche B."/>
            <person name="Rose M."/>
            <person name="Sadaie Y."/>
            <person name="Sato T."/>
            <person name="Scanlan E."/>
            <person name="Schleich S."/>
            <person name="Schroeter R."/>
            <person name="Scoffone F."/>
            <person name="Sekiguchi J."/>
            <person name="Sekowska A."/>
            <person name="Seror S.J."/>
            <person name="Serror P."/>
            <person name="Shin B.-S."/>
            <person name="Soldo B."/>
            <person name="Sorokin A."/>
            <person name="Tacconi E."/>
            <person name="Takagi T."/>
            <person name="Takahashi H."/>
            <person name="Takemaru K."/>
            <person name="Takeuchi M."/>
            <person name="Tamakoshi A."/>
            <person name="Tanaka T."/>
            <person name="Terpstra P."/>
            <person name="Tognoni A."/>
            <person name="Tosato V."/>
            <person name="Uchiyama S."/>
            <person name="Vandenbol M."/>
            <person name="Vannier F."/>
            <person name="Vassarotti A."/>
            <person name="Viari A."/>
            <person name="Wambutt R."/>
            <person name="Wedler E."/>
            <person name="Wedler H."/>
            <person name="Weitzenegger T."/>
            <person name="Winters P."/>
            <person name="Wipat A."/>
            <person name="Yamamoto H."/>
            <person name="Yamane K."/>
            <person name="Yasumoto K."/>
            <person name="Yata K."/>
            <person name="Yoshida K."/>
            <person name="Yoshikawa H.-F."/>
            <person name="Zumstein E."/>
            <person name="Yoshikawa H."/>
            <person name="Danchin A."/>
        </authorList>
    </citation>
    <scope>NUCLEOTIDE SEQUENCE [LARGE SCALE GENOMIC DNA]</scope>
    <source>
        <strain>168</strain>
    </source>
</reference>
<reference key="3">
    <citation type="journal article" date="1997" name="Electrophoresis">
        <title>First steps from a two-dimensional protein index towards a response-regulation map for Bacillus subtilis.</title>
        <authorList>
            <person name="Antelmann H."/>
            <person name="Bernhardt J."/>
            <person name="Schmid R."/>
            <person name="Mach H."/>
            <person name="Voelker U."/>
            <person name="Hecker M."/>
        </authorList>
    </citation>
    <scope>PROTEIN SEQUENCE OF 2-15</scope>
    <source>
        <strain>168 / IS58</strain>
    </source>
</reference>
<sequence length="300" mass="31382">MSVFINKDTRVIVQGITGSTALFHTKQMLEYGTNIVGGVTPGKGGTEAEGVPVFNTVAEAVQTTGANASVIYVPAPFAADAIMEAVDAELDLVICITEHIPVLDMVKVKRFMEGKKTRLIGPNCPGVITPEECKIGIMPGYIHKKGHVGVVSRSGTLTYEAVHQLSEAGVGQSTAVGIGGDPVNGTNFIDVLKAFNEDPDTHAVIMIGEIGGTAEEEAAEWVKANMTKPVVGFIGGKTAPPGKRMGHAGAIISGGKGTADEKIKTLNACGIEVAETPSVMGETLIKVLKEKNLFETCKTH</sequence>
<proteinExistence type="evidence at protein level"/>
<accession>P80865</accession>
<protein>
    <recommendedName>
        <fullName evidence="1">Succinate--CoA ligase [ADP-forming] subunit alpha</fullName>
        <ecNumber evidence="1">6.2.1.5</ecNumber>
    </recommendedName>
    <alternativeName>
        <fullName evidence="1">Succinyl-CoA synthetase subunit alpha</fullName>
        <shortName evidence="1">SCS-alpha</shortName>
    </alternativeName>
</protein>
<name>SUCD_BACSU</name>
<organism>
    <name type="scientific">Bacillus subtilis (strain 168)</name>
    <dbReference type="NCBI Taxonomy" id="224308"/>
    <lineage>
        <taxon>Bacteria</taxon>
        <taxon>Bacillati</taxon>
        <taxon>Bacillota</taxon>
        <taxon>Bacilli</taxon>
        <taxon>Bacillales</taxon>
        <taxon>Bacillaceae</taxon>
        <taxon>Bacillus</taxon>
    </lineage>
</organism>
<keyword id="KW-0903">Direct protein sequencing</keyword>
<keyword id="KW-0436">Ligase</keyword>
<keyword id="KW-0547">Nucleotide-binding</keyword>
<keyword id="KW-1185">Reference proteome</keyword>
<keyword id="KW-0816">Tricarboxylic acid cycle</keyword>
<gene>
    <name evidence="1" type="primary">sucD</name>
    <name type="ordered locus">BSU16100</name>
</gene>
<dbReference type="EC" id="6.2.1.5" evidence="1"/>
<dbReference type="EMBL" id="AJ000975">
    <property type="protein sequence ID" value="CAA04420.1"/>
    <property type="molecule type" value="Genomic_DNA"/>
</dbReference>
<dbReference type="EMBL" id="AL009126">
    <property type="protein sequence ID" value="CAB13483.1"/>
    <property type="molecule type" value="Genomic_DNA"/>
</dbReference>
<dbReference type="PIR" id="F69719">
    <property type="entry name" value="F69719"/>
</dbReference>
<dbReference type="RefSeq" id="NP_389492.1">
    <property type="nucleotide sequence ID" value="NC_000964.3"/>
</dbReference>
<dbReference type="RefSeq" id="WP_003238566.1">
    <property type="nucleotide sequence ID" value="NZ_OZ025638.1"/>
</dbReference>
<dbReference type="SMR" id="P80865"/>
<dbReference type="FunCoup" id="P80865">
    <property type="interactions" value="624"/>
</dbReference>
<dbReference type="IntAct" id="P80865">
    <property type="interactions" value="1"/>
</dbReference>
<dbReference type="MINT" id="P80865"/>
<dbReference type="STRING" id="224308.BSU16100"/>
<dbReference type="jPOST" id="P80865"/>
<dbReference type="PaxDb" id="224308-BSU16100"/>
<dbReference type="EnsemblBacteria" id="CAB13483">
    <property type="protein sequence ID" value="CAB13483"/>
    <property type="gene ID" value="BSU_16100"/>
</dbReference>
<dbReference type="GeneID" id="86873881"/>
<dbReference type="GeneID" id="937797"/>
<dbReference type="KEGG" id="bsu:BSU16100"/>
<dbReference type="PATRIC" id="fig|224308.179.peg.1750"/>
<dbReference type="eggNOG" id="COG0074">
    <property type="taxonomic scope" value="Bacteria"/>
</dbReference>
<dbReference type="InParanoid" id="P80865"/>
<dbReference type="OrthoDB" id="9807196at2"/>
<dbReference type="PhylomeDB" id="P80865"/>
<dbReference type="BioCyc" id="BSUB:BSU16100-MONOMER"/>
<dbReference type="UniPathway" id="UPA00223">
    <property type="reaction ID" value="UER00999"/>
</dbReference>
<dbReference type="PRO" id="PR:P80865"/>
<dbReference type="Proteomes" id="UP000001570">
    <property type="component" value="Chromosome"/>
</dbReference>
<dbReference type="GO" id="GO:0009361">
    <property type="term" value="C:succinate-CoA ligase complex (ADP-forming)"/>
    <property type="evidence" value="ECO:0000318"/>
    <property type="project" value="GO_Central"/>
</dbReference>
<dbReference type="GO" id="GO:0000166">
    <property type="term" value="F:nucleotide binding"/>
    <property type="evidence" value="ECO:0007669"/>
    <property type="project" value="UniProtKB-KW"/>
</dbReference>
<dbReference type="GO" id="GO:0004775">
    <property type="term" value="F:succinate-CoA ligase (ADP-forming) activity"/>
    <property type="evidence" value="ECO:0000318"/>
    <property type="project" value="GO_Central"/>
</dbReference>
<dbReference type="GO" id="GO:0004776">
    <property type="term" value="F:succinate-CoA ligase (GDP-forming) activity"/>
    <property type="evidence" value="ECO:0000318"/>
    <property type="project" value="GO_Central"/>
</dbReference>
<dbReference type="GO" id="GO:0006099">
    <property type="term" value="P:tricarboxylic acid cycle"/>
    <property type="evidence" value="ECO:0000318"/>
    <property type="project" value="GO_Central"/>
</dbReference>
<dbReference type="FunFam" id="3.40.50.261:FF:000002">
    <property type="entry name" value="Succinate--CoA ligase [ADP-forming] subunit alpha"/>
    <property type="match status" value="1"/>
</dbReference>
<dbReference type="FunFam" id="3.40.50.720:FF:000002">
    <property type="entry name" value="Succinate--CoA ligase [ADP-forming] subunit alpha"/>
    <property type="match status" value="1"/>
</dbReference>
<dbReference type="Gene3D" id="3.40.50.720">
    <property type="entry name" value="NAD(P)-binding Rossmann-like Domain"/>
    <property type="match status" value="1"/>
</dbReference>
<dbReference type="Gene3D" id="3.40.50.261">
    <property type="entry name" value="Succinyl-CoA synthetase domains"/>
    <property type="match status" value="1"/>
</dbReference>
<dbReference type="HAMAP" id="MF_01988">
    <property type="entry name" value="Succ_CoA_alpha"/>
    <property type="match status" value="1"/>
</dbReference>
<dbReference type="InterPro" id="IPR017440">
    <property type="entry name" value="Cit_synth/succinyl-CoA_lig_AS"/>
</dbReference>
<dbReference type="InterPro" id="IPR033847">
    <property type="entry name" value="Citrt_syn/SCS-alpha_CS"/>
</dbReference>
<dbReference type="InterPro" id="IPR003781">
    <property type="entry name" value="CoA-bd"/>
</dbReference>
<dbReference type="InterPro" id="IPR005810">
    <property type="entry name" value="CoA_lig_alpha"/>
</dbReference>
<dbReference type="InterPro" id="IPR036291">
    <property type="entry name" value="NAD(P)-bd_dom_sf"/>
</dbReference>
<dbReference type="InterPro" id="IPR005811">
    <property type="entry name" value="SUCC_ACL_C"/>
</dbReference>
<dbReference type="InterPro" id="IPR016102">
    <property type="entry name" value="Succinyl-CoA_synth-like"/>
</dbReference>
<dbReference type="NCBIfam" id="NF004230">
    <property type="entry name" value="PRK05678.1"/>
    <property type="match status" value="1"/>
</dbReference>
<dbReference type="NCBIfam" id="TIGR01019">
    <property type="entry name" value="sucCoAalpha"/>
    <property type="match status" value="1"/>
</dbReference>
<dbReference type="PANTHER" id="PTHR11117:SF2">
    <property type="entry name" value="SUCCINATE--COA LIGASE [ADP_GDP-FORMING] SUBUNIT ALPHA, MITOCHONDRIAL"/>
    <property type="match status" value="1"/>
</dbReference>
<dbReference type="PANTHER" id="PTHR11117">
    <property type="entry name" value="SUCCINYL-COA LIGASE SUBUNIT ALPHA"/>
    <property type="match status" value="1"/>
</dbReference>
<dbReference type="Pfam" id="PF02629">
    <property type="entry name" value="CoA_binding"/>
    <property type="match status" value="1"/>
</dbReference>
<dbReference type="Pfam" id="PF00549">
    <property type="entry name" value="Ligase_CoA"/>
    <property type="match status" value="1"/>
</dbReference>
<dbReference type="PIRSF" id="PIRSF001553">
    <property type="entry name" value="SucCS_alpha"/>
    <property type="match status" value="1"/>
</dbReference>
<dbReference type="PRINTS" id="PR01798">
    <property type="entry name" value="SCOASYNTHASE"/>
</dbReference>
<dbReference type="SMART" id="SM00881">
    <property type="entry name" value="CoA_binding"/>
    <property type="match status" value="1"/>
</dbReference>
<dbReference type="SUPFAM" id="SSF51735">
    <property type="entry name" value="NAD(P)-binding Rossmann-fold domains"/>
    <property type="match status" value="1"/>
</dbReference>
<dbReference type="SUPFAM" id="SSF52210">
    <property type="entry name" value="Succinyl-CoA synthetase domains"/>
    <property type="match status" value="1"/>
</dbReference>
<dbReference type="PROSITE" id="PS01216">
    <property type="entry name" value="SUCCINYL_COA_LIG_1"/>
    <property type="match status" value="1"/>
</dbReference>
<dbReference type="PROSITE" id="PS00399">
    <property type="entry name" value="SUCCINYL_COA_LIG_2"/>
    <property type="match status" value="1"/>
</dbReference>
<feature type="initiator methionine" description="Removed" evidence="2">
    <location>
        <position position="1"/>
    </location>
</feature>
<feature type="chain" id="PRO_0000102789" description="Succinate--CoA ligase [ADP-forming] subunit alpha">
    <location>
        <begin position="2"/>
        <end position="300"/>
    </location>
</feature>
<feature type="active site" description="Tele-phosphohistidine intermediate" evidence="1">
    <location>
        <position position="247"/>
    </location>
</feature>
<feature type="binding site" evidence="1">
    <location>
        <begin position="17"/>
        <end position="20"/>
    </location>
    <ligand>
        <name>CoA</name>
        <dbReference type="ChEBI" id="CHEBI:57287"/>
    </ligand>
</feature>
<feature type="binding site" evidence="1">
    <location>
        <position position="43"/>
    </location>
    <ligand>
        <name>CoA</name>
        <dbReference type="ChEBI" id="CHEBI:57287"/>
    </ligand>
</feature>
<feature type="binding site" evidence="1">
    <location>
        <begin position="96"/>
        <end position="98"/>
    </location>
    <ligand>
        <name>CoA</name>
        <dbReference type="ChEBI" id="CHEBI:57287"/>
    </ligand>
</feature>
<feature type="binding site" evidence="1">
    <location>
        <position position="159"/>
    </location>
    <ligand>
        <name>substrate</name>
        <note>ligand shared with subunit beta</note>
    </ligand>
</feature>